<feature type="signal peptide" evidence="3">
    <location>
        <begin position="1"/>
        <end position="19"/>
    </location>
</feature>
<feature type="peptide" id="PRO_0000026710" description="Protease inhibitor SGPI-1" evidence="3">
    <location>
        <begin position="20"/>
        <end position="54"/>
    </location>
</feature>
<feature type="peptide" id="PRO_0000026711" description="Protease inhibitor SGPI-2" evidence="3">
    <location>
        <begin position="57"/>
        <end position="91"/>
    </location>
</feature>
<feature type="domain" description="Pacifastin 1" evidence="1">
    <location>
        <begin position="20"/>
        <end position="54"/>
    </location>
</feature>
<feature type="domain" description="Pacifastin 2" evidence="1">
    <location>
        <begin position="57"/>
        <end position="92"/>
    </location>
</feature>
<feature type="site" description="Reactive bond">
    <location>
        <begin position="48"/>
        <end position="49"/>
    </location>
</feature>
<feature type="site" description="Reactive bond">
    <location>
        <begin position="86"/>
        <end position="87"/>
    </location>
</feature>
<feature type="disulfide bond" evidence="2 9">
    <location>
        <begin position="23"/>
        <end position="38"/>
    </location>
</feature>
<feature type="disulfide bond" evidence="2 9">
    <location>
        <begin position="33"/>
        <end position="51"/>
    </location>
</feature>
<feature type="disulfide bond" evidence="2 9">
    <location>
        <begin position="36"/>
        <end position="46"/>
    </location>
</feature>
<feature type="disulfide bond" evidence="2 7 8">
    <location>
        <begin position="60"/>
        <end position="75"/>
    </location>
</feature>
<feature type="disulfide bond" evidence="2 7 8">
    <location>
        <begin position="70"/>
        <end position="89"/>
    </location>
</feature>
<feature type="disulfide bond" evidence="2 7 8">
    <location>
        <begin position="73"/>
        <end position="84"/>
    </location>
</feature>
<feature type="strand" evidence="11">
    <location>
        <begin position="28"/>
        <end position="31"/>
    </location>
</feature>
<feature type="strand" evidence="11">
    <location>
        <begin position="34"/>
        <end position="38"/>
    </location>
</feature>
<feature type="strand" evidence="11">
    <location>
        <begin position="44"/>
        <end position="47"/>
    </location>
</feature>
<feature type="turn" evidence="10">
    <location>
        <begin position="62"/>
        <end position="64"/>
    </location>
</feature>
<feature type="strand" evidence="12">
    <location>
        <begin position="65"/>
        <end position="68"/>
    </location>
</feature>
<feature type="strand" evidence="12">
    <location>
        <begin position="71"/>
        <end position="75"/>
    </location>
</feature>
<feature type="strand" evidence="13">
    <location>
        <begin position="77"/>
        <end position="80"/>
    </location>
</feature>
<feature type="strand" evidence="12">
    <location>
        <begin position="82"/>
        <end position="85"/>
    </location>
</feature>
<name>SGP1_SCHGR</name>
<protein>
    <recommendedName>
        <fullName>Serine protease inhibitor I/II</fullName>
    </recommendedName>
    <component>
        <recommendedName>
            <fullName>Protease inhibitor SGPI-1</fullName>
        </recommendedName>
        <alternativeName>
            <fullName>Schistocerca gregaria trypsin inhibitor</fullName>
            <shortName>SGTI</shortName>
        </alternativeName>
    </component>
    <component>
        <recommendedName>
            <fullName>Protease inhibitor SGPI-2</fullName>
        </recommendedName>
        <alternativeName>
            <fullName>Schistocerca gregaria chymotrypsin inhibitor</fullName>
            <shortName>SGCI</shortName>
        </alternativeName>
    </component>
</protein>
<dbReference type="EMBL" id="Y09605">
    <property type="protein sequence ID" value="CAA70818.1"/>
    <property type="molecule type" value="mRNA"/>
</dbReference>
<dbReference type="RefSeq" id="XP_049839094.1">
    <property type="nucleotide sequence ID" value="XM_049983137.1"/>
</dbReference>
<dbReference type="PDB" id="1KGM">
    <property type="method" value="NMR"/>
    <property type="chains" value="A=57-91"/>
</dbReference>
<dbReference type="PDB" id="1KIO">
    <property type="method" value="NMR"/>
    <property type="chains" value="A=57-91"/>
</dbReference>
<dbReference type="PDB" id="1KJ0">
    <property type="method" value="NMR"/>
    <property type="chains" value="A=20-54"/>
</dbReference>
<dbReference type="PDB" id="2F91">
    <property type="method" value="X-ray"/>
    <property type="resolution" value="1.20 A"/>
    <property type="chains" value="B=20-54"/>
</dbReference>
<dbReference type="PDB" id="2XTT">
    <property type="method" value="X-ray"/>
    <property type="resolution" value="0.93 A"/>
    <property type="chains" value="A=20-54"/>
</dbReference>
<dbReference type="PDB" id="3TVJ">
    <property type="method" value="X-ray"/>
    <property type="resolution" value="1.28 A"/>
    <property type="chains" value="I=57-91"/>
</dbReference>
<dbReference type="PDB" id="4DJZ">
    <property type="method" value="X-ray"/>
    <property type="resolution" value="3.20 A"/>
    <property type="chains" value="H/I=57-87"/>
</dbReference>
<dbReference type="PDBsum" id="1KGM"/>
<dbReference type="PDBsum" id="1KIO"/>
<dbReference type="PDBsum" id="1KJ0"/>
<dbReference type="PDBsum" id="2F91"/>
<dbReference type="PDBsum" id="2XTT"/>
<dbReference type="PDBsum" id="3TVJ"/>
<dbReference type="PDBsum" id="4DJZ"/>
<dbReference type="SMR" id="O46162"/>
<dbReference type="MEROPS" id="I19.001"/>
<dbReference type="MEROPS" id="I19.011"/>
<dbReference type="EnsemblMetazoa" id="XM_049983137.1">
    <property type="protein sequence ID" value="XP_049839094.1"/>
    <property type="gene ID" value="LOC126284306"/>
</dbReference>
<dbReference type="GeneID" id="126284306"/>
<dbReference type="OrthoDB" id="10026631at2759"/>
<dbReference type="EvolutionaryTrace" id="O46162"/>
<dbReference type="GO" id="GO:0005576">
    <property type="term" value="C:extracellular region"/>
    <property type="evidence" value="ECO:0007669"/>
    <property type="project" value="UniProtKB-SubCell"/>
</dbReference>
<dbReference type="GO" id="GO:0004867">
    <property type="term" value="F:serine-type endopeptidase inhibitor activity"/>
    <property type="evidence" value="ECO:0007669"/>
    <property type="project" value="UniProtKB-KW"/>
</dbReference>
<dbReference type="InterPro" id="IPR008037">
    <property type="entry name" value="Pacifastin_dom"/>
</dbReference>
<dbReference type="InterPro" id="IPR036201">
    <property type="entry name" value="Pacifastin_dom_sf"/>
</dbReference>
<dbReference type="InterPro" id="IPR016307">
    <property type="entry name" value="Prtase-inh_pacifastin"/>
</dbReference>
<dbReference type="Pfam" id="PF05375">
    <property type="entry name" value="Pacifastin_I"/>
    <property type="match status" value="2"/>
</dbReference>
<dbReference type="PIRSF" id="PIRSF001625">
    <property type="entry name" value="Prot_inhib_pacifastin"/>
    <property type="match status" value="1"/>
</dbReference>
<dbReference type="SUPFAM" id="SSF57283">
    <property type="entry name" value="PMP inhibitors"/>
    <property type="match status" value="2"/>
</dbReference>
<dbReference type="PROSITE" id="PS51446">
    <property type="entry name" value="PACIFASTIN"/>
    <property type="match status" value="2"/>
</dbReference>
<reference key="1">
    <citation type="journal article" date="1998" name="Eur. J. Biochem.">
        <title>Cloning of two cDNAs encoding three small serine protease inhibiting peptides from the desert locust Schistocerca gregaria and analysis of tissue-dependent and stage-dependent expression.</title>
        <authorList>
            <person name="Vanden Broeck J."/>
            <person name="Chiou S.-J."/>
            <person name="Schoofs L."/>
            <person name="Hamdaoui A."/>
            <person name="Vandenbussche F."/>
            <person name="Simonet G."/>
            <person name="Wataleb S."/>
            <person name="De Loof A."/>
        </authorList>
    </citation>
    <scope>NUCLEOTIDE SEQUENCE [MRNA]</scope>
    <source>
        <tissue>Ovary</tissue>
    </source>
</reference>
<reference key="2">
    <citation type="journal article" date="1998" name="FEBS Lett.">
        <title>Purification and characterization of a group of five novel peptide serine protease inhibitors from ovaries of the desert locust, Schistocerca gregaria.</title>
        <authorList>
            <person name="Hamdaoui A."/>
            <person name="Wataleb S."/>
            <person name="Devreese B."/>
            <person name="Chiou S.-J."/>
            <person name="Vanden Broeck J."/>
            <person name="Van Beeumen J."/>
            <person name="De Loof A."/>
            <person name="Schoofs L."/>
        </authorList>
    </citation>
    <scope>PROTEIN SEQUENCE OF 20-54 AND 57-91</scope>
    <scope>FUNCTION</scope>
    <scope>TISSUE SPECIFICITY</scope>
    <source>
        <tissue>Ovary</tissue>
    </source>
</reference>
<reference evidence="4 5 6" key="3">
    <citation type="journal article" date="2002" name="Comp. Biochem. Physiol.">
        <title>Structural and functional properties of a novel serine protease inhibiting peptide family in arthropods.</title>
        <authorList>
            <person name="Simonet G."/>
            <person name="Claeys I."/>
            <person name="Vanden Broeck J."/>
        </authorList>
    </citation>
    <scope>STRUCTURE BY NMR OF 20-54 AND 57-91</scope>
    <scope>DISULFIDE BONDS</scope>
</reference>
<keyword id="KW-0002">3D-structure</keyword>
<keyword id="KW-0165">Cleavage on pair of basic residues</keyword>
<keyword id="KW-0903">Direct protein sequencing</keyword>
<keyword id="KW-1015">Disulfide bond</keyword>
<keyword id="KW-0646">Protease inhibitor</keyword>
<keyword id="KW-0677">Repeat</keyword>
<keyword id="KW-0964">Secreted</keyword>
<keyword id="KW-0722">Serine protease inhibitor</keyword>
<keyword id="KW-0732">Signal</keyword>
<accession>O46162</accession>
<proteinExistence type="evidence at protein level"/>
<sequence>MKLALALCAAFLLVVLVQAEQECTPGQTKKQDCNTCNCTPTGVWACTRKGCPPHKREVTCEPGTTFKDKCNTCRCGSDGKSAACTLKACPQK</sequence>
<comment type="function">
    <molecule>Protease inhibitor SGPI-1</molecule>
    <text evidence="3">In vitro, is active against alpha-chymotrypsin and trypsin.</text>
</comment>
<comment type="function">
    <molecule>Protease inhibitor SGPI-2</molecule>
    <text evidence="3">In vitro, is active against alpha-chymotrypsin and pancreatic elastase.</text>
</comment>
<comment type="subcellular location">
    <subcellularLocation>
        <location>Secreted</location>
    </subcellularLocation>
</comment>
<comment type="tissue specificity">
    <text evidence="3">Expressed in hemolymph, ovaries, testes and fat body of adults but are absent in the gut. Also present in larval hemolymph and fat body.</text>
</comment>
<comment type="similarity">
    <text evidence="1">Belongs to the protease inhibitor I19 family.</text>
</comment>
<evidence type="ECO:0000255" key="1">
    <source>
        <dbReference type="PROSITE-ProRule" id="PRU00776"/>
    </source>
</evidence>
<evidence type="ECO:0000269" key="2">
    <source>
    </source>
</evidence>
<evidence type="ECO:0000269" key="3">
    <source>
    </source>
</evidence>
<evidence type="ECO:0000312" key="4">
    <source>
        <dbReference type="PDB" id="1KGM"/>
    </source>
</evidence>
<evidence type="ECO:0000312" key="5">
    <source>
        <dbReference type="PDB" id="1KIO"/>
    </source>
</evidence>
<evidence type="ECO:0000312" key="6">
    <source>
        <dbReference type="PDB" id="1KJ0"/>
    </source>
</evidence>
<evidence type="ECO:0007744" key="7">
    <source>
        <dbReference type="PDB" id="1KGM"/>
    </source>
</evidence>
<evidence type="ECO:0007744" key="8">
    <source>
        <dbReference type="PDB" id="1KIO"/>
    </source>
</evidence>
<evidence type="ECO:0007744" key="9">
    <source>
        <dbReference type="PDB" id="1KJ0"/>
    </source>
</evidence>
<evidence type="ECO:0007829" key="10">
    <source>
        <dbReference type="PDB" id="1KGM"/>
    </source>
</evidence>
<evidence type="ECO:0007829" key="11">
    <source>
        <dbReference type="PDB" id="2XTT"/>
    </source>
</evidence>
<evidence type="ECO:0007829" key="12">
    <source>
        <dbReference type="PDB" id="3TVJ"/>
    </source>
</evidence>
<evidence type="ECO:0007829" key="13">
    <source>
        <dbReference type="PDB" id="4DJZ"/>
    </source>
</evidence>
<organism>
    <name type="scientific">Schistocerca gregaria</name>
    <name type="common">Desert locust</name>
    <name type="synonym">Gryllus gregarius</name>
    <dbReference type="NCBI Taxonomy" id="7010"/>
    <lineage>
        <taxon>Eukaryota</taxon>
        <taxon>Metazoa</taxon>
        <taxon>Ecdysozoa</taxon>
        <taxon>Arthropoda</taxon>
        <taxon>Hexapoda</taxon>
        <taxon>Insecta</taxon>
        <taxon>Pterygota</taxon>
        <taxon>Neoptera</taxon>
        <taxon>Polyneoptera</taxon>
        <taxon>Orthoptera</taxon>
        <taxon>Caelifera</taxon>
        <taxon>Acrididea</taxon>
        <taxon>Acridomorpha</taxon>
        <taxon>Acridoidea</taxon>
        <taxon>Acrididae</taxon>
        <taxon>Cyrtacanthacridinae</taxon>
        <taxon>Schistocerca</taxon>
    </lineage>
</organism>